<evidence type="ECO:0000305" key="1"/>
<dbReference type="EMBL" id="AE017283">
    <property type="protein sequence ID" value="AAT81978.1"/>
    <property type="status" value="ALT_INIT"/>
    <property type="molecule type" value="Genomic_DNA"/>
</dbReference>
<dbReference type="SMR" id="Q6AB88"/>
<dbReference type="EnsemblBacteria" id="AAT81978">
    <property type="protein sequence ID" value="AAT81978"/>
    <property type="gene ID" value="PPA0217"/>
</dbReference>
<dbReference type="KEGG" id="pac:PPA0217"/>
<dbReference type="PATRIC" id="fig|267747.3.peg.227"/>
<dbReference type="eggNOG" id="COG3681">
    <property type="taxonomic scope" value="Bacteria"/>
</dbReference>
<dbReference type="HOGENOM" id="CLU_051840_1_0_11"/>
<dbReference type="Proteomes" id="UP000000603">
    <property type="component" value="Chromosome"/>
</dbReference>
<dbReference type="GO" id="GO:0080146">
    <property type="term" value="F:L-cysteine desulfhydrase activity"/>
    <property type="evidence" value="ECO:0007669"/>
    <property type="project" value="TreeGrafter"/>
</dbReference>
<dbReference type="GO" id="GO:0019450">
    <property type="term" value="P:L-cysteine catabolic process to pyruvate"/>
    <property type="evidence" value="ECO:0007669"/>
    <property type="project" value="TreeGrafter"/>
</dbReference>
<dbReference type="InterPro" id="IPR005130">
    <property type="entry name" value="Ser_deHydtase-like_asu"/>
</dbReference>
<dbReference type="InterPro" id="IPR021144">
    <property type="entry name" value="UPF0597"/>
</dbReference>
<dbReference type="PANTHER" id="PTHR30501">
    <property type="entry name" value="UPF0597 PROTEIN YHAM"/>
    <property type="match status" value="1"/>
</dbReference>
<dbReference type="PANTHER" id="PTHR30501:SF2">
    <property type="entry name" value="UPF0597 PROTEIN YHAM"/>
    <property type="match status" value="1"/>
</dbReference>
<dbReference type="Pfam" id="PF03313">
    <property type="entry name" value="SDH_alpha"/>
    <property type="match status" value="1"/>
</dbReference>
<organism>
    <name type="scientific">Cutibacterium acnes (strain DSM 16379 / KPA171202)</name>
    <name type="common">Propionibacterium acnes</name>
    <dbReference type="NCBI Taxonomy" id="267747"/>
    <lineage>
        <taxon>Bacteria</taxon>
        <taxon>Bacillati</taxon>
        <taxon>Actinomycetota</taxon>
        <taxon>Actinomycetes</taxon>
        <taxon>Propionibacteriales</taxon>
        <taxon>Propionibacteriaceae</taxon>
        <taxon>Cutibacterium</taxon>
    </lineage>
</organism>
<proteinExistence type="inferred from homology"/>
<reference key="1">
    <citation type="journal article" date="2004" name="Science">
        <title>The complete genome sequence of Propionibacterium acnes, a commensal of human skin.</title>
        <authorList>
            <person name="Brueggemann H."/>
            <person name="Henne A."/>
            <person name="Hoster F."/>
            <person name="Liesegang H."/>
            <person name="Wiezer A."/>
            <person name="Strittmatter A."/>
            <person name="Hujer S."/>
            <person name="Duerre P."/>
            <person name="Gottschalk G."/>
        </authorList>
    </citation>
    <scope>NUCLEOTIDE SEQUENCE [LARGE SCALE GENOMIC DNA]</scope>
    <source>
        <strain>DSM 16379 / KPA171202</strain>
    </source>
</reference>
<accession>Q6AB88</accession>
<protein>
    <recommendedName>
        <fullName>UPF0597 protein PPA0217</fullName>
    </recommendedName>
</protein>
<comment type="similarity">
    <text evidence="1">Belongs to the UPF0597 family.</text>
</comment>
<comment type="sequence caution" evidence="1">
    <conflict type="erroneous initiation">
        <sequence resource="EMBL-CDS" id="AAT81978"/>
    </conflict>
</comment>
<sequence>MGALAGNPDAGLAVLADVSEDAAEKARHLVDSGAVELTVADVDDDLYAETVLHLDGHHARACIAGDHTNVFLVSRDDEVLESKERPAAGHVPPTAALLQGLSLAKIYDFATTVDIERIEFITEAERLNSALVDAGRDGSYGIGEGAAILGSIDRGMASDDLCTRMTAYTAAASDARMGGAPLPAMTNSGSGNQGIVATVPVTVAADYAGVDHERRVRALALSHAVALYAHAGLPVLSAFCAATTAAMGAAAGICLVLDGSYSAVERAVASMTGDVVGMVCDGAGCSCALKVSASANAAGRAALLSLAGRRVPGTNGLVHDDVDAAIRGIGRLGTEGMKQTDPEILSLMMAKQTV</sequence>
<feature type="chain" id="PRO_0000339837" description="UPF0597 protein PPA0217">
    <location>
        <begin position="1"/>
        <end position="354"/>
    </location>
</feature>
<gene>
    <name type="ordered locus">PPA0217</name>
</gene>
<name>Y217_CUTAK</name>